<gene>
    <name type="primary">sat</name>
    <name type="ordered locus">slr1165</name>
</gene>
<dbReference type="EC" id="2.7.7.4"/>
<dbReference type="EMBL" id="BA000022">
    <property type="protein sequence ID" value="BAA18335.1"/>
    <property type="molecule type" value="Genomic_DNA"/>
</dbReference>
<dbReference type="PIR" id="S75876">
    <property type="entry name" value="S75876"/>
</dbReference>
<dbReference type="SMR" id="P74241"/>
<dbReference type="FunCoup" id="P74241">
    <property type="interactions" value="285"/>
</dbReference>
<dbReference type="IntAct" id="P74241">
    <property type="interactions" value="2"/>
</dbReference>
<dbReference type="STRING" id="1148.gene:10499211"/>
<dbReference type="PaxDb" id="1148-1653421"/>
<dbReference type="EnsemblBacteria" id="BAA18335">
    <property type="protein sequence ID" value="BAA18335"/>
    <property type="gene ID" value="BAA18335"/>
</dbReference>
<dbReference type="KEGG" id="syn:slr1165"/>
<dbReference type="eggNOG" id="COG2046">
    <property type="taxonomic scope" value="Bacteria"/>
</dbReference>
<dbReference type="InParanoid" id="P74241"/>
<dbReference type="PhylomeDB" id="P74241"/>
<dbReference type="BRENDA" id="2.7.7.4">
    <property type="organism ID" value="382"/>
</dbReference>
<dbReference type="UniPathway" id="UPA00140">
    <property type="reaction ID" value="UER00204"/>
</dbReference>
<dbReference type="Proteomes" id="UP000001425">
    <property type="component" value="Chromosome"/>
</dbReference>
<dbReference type="GO" id="GO:0005524">
    <property type="term" value="F:ATP binding"/>
    <property type="evidence" value="ECO:0007669"/>
    <property type="project" value="UniProtKB-KW"/>
</dbReference>
<dbReference type="GO" id="GO:0004781">
    <property type="term" value="F:sulfate adenylyltransferase (ATP) activity"/>
    <property type="evidence" value="ECO:0007669"/>
    <property type="project" value="UniProtKB-UniRule"/>
</dbReference>
<dbReference type="GO" id="GO:0070814">
    <property type="term" value="P:hydrogen sulfide biosynthetic process"/>
    <property type="evidence" value="ECO:0007669"/>
    <property type="project" value="UniProtKB-UniRule"/>
</dbReference>
<dbReference type="GO" id="GO:0000103">
    <property type="term" value="P:sulfate assimilation"/>
    <property type="evidence" value="ECO:0007669"/>
    <property type="project" value="UniProtKB-UniRule"/>
</dbReference>
<dbReference type="CDD" id="cd00517">
    <property type="entry name" value="ATPS"/>
    <property type="match status" value="1"/>
</dbReference>
<dbReference type="Gene3D" id="3.40.50.620">
    <property type="entry name" value="HUPs"/>
    <property type="match status" value="1"/>
</dbReference>
<dbReference type="Gene3D" id="3.10.400.10">
    <property type="entry name" value="Sulfate adenylyltransferase"/>
    <property type="match status" value="1"/>
</dbReference>
<dbReference type="HAMAP" id="MF_00066">
    <property type="entry name" value="Sulf_adenylyltr"/>
    <property type="match status" value="1"/>
</dbReference>
<dbReference type="InterPro" id="IPR025980">
    <property type="entry name" value="ATP-Sase_PUA-like_dom"/>
</dbReference>
<dbReference type="InterPro" id="IPR015947">
    <property type="entry name" value="PUA-like_sf"/>
</dbReference>
<dbReference type="InterPro" id="IPR014729">
    <property type="entry name" value="Rossmann-like_a/b/a_fold"/>
</dbReference>
<dbReference type="InterPro" id="IPR020792">
    <property type="entry name" value="SO4_adenylyltransferase_pro"/>
</dbReference>
<dbReference type="InterPro" id="IPR024951">
    <property type="entry name" value="Sulfurylase_cat_dom"/>
</dbReference>
<dbReference type="InterPro" id="IPR002650">
    <property type="entry name" value="Sulphate_adenylyltransferase"/>
</dbReference>
<dbReference type="NCBIfam" id="NF003166">
    <property type="entry name" value="PRK04149.1"/>
    <property type="match status" value="1"/>
</dbReference>
<dbReference type="NCBIfam" id="TIGR00339">
    <property type="entry name" value="sopT"/>
    <property type="match status" value="1"/>
</dbReference>
<dbReference type="PANTHER" id="PTHR43509">
    <property type="match status" value="1"/>
</dbReference>
<dbReference type="PANTHER" id="PTHR43509:SF1">
    <property type="entry name" value="SULFATE ADENYLYLTRANSFERASE"/>
    <property type="match status" value="1"/>
</dbReference>
<dbReference type="Pfam" id="PF01747">
    <property type="entry name" value="ATP-sulfurylase"/>
    <property type="match status" value="1"/>
</dbReference>
<dbReference type="Pfam" id="PF14306">
    <property type="entry name" value="PUA_2"/>
    <property type="match status" value="1"/>
</dbReference>
<dbReference type="SUPFAM" id="SSF52374">
    <property type="entry name" value="Nucleotidylyl transferase"/>
    <property type="match status" value="1"/>
</dbReference>
<dbReference type="SUPFAM" id="SSF88697">
    <property type="entry name" value="PUA domain-like"/>
    <property type="match status" value="1"/>
</dbReference>
<organism>
    <name type="scientific">Synechocystis sp. (strain ATCC 27184 / PCC 6803 / Kazusa)</name>
    <dbReference type="NCBI Taxonomy" id="1111708"/>
    <lineage>
        <taxon>Bacteria</taxon>
        <taxon>Bacillati</taxon>
        <taxon>Cyanobacteriota</taxon>
        <taxon>Cyanophyceae</taxon>
        <taxon>Synechococcales</taxon>
        <taxon>Merismopediaceae</taxon>
        <taxon>Synechocystis</taxon>
    </lineage>
</organism>
<proteinExistence type="inferred from homology"/>
<name>SAT_SYNY3</name>
<protein>
    <recommendedName>
        <fullName>Sulfate adenylyltransferase</fullName>
        <ecNumber>2.7.7.4</ecNumber>
    </recommendedName>
    <alternativeName>
        <fullName>ATP-sulfurylase</fullName>
    </alternativeName>
    <alternativeName>
        <fullName>Sulfate adenylate transferase</fullName>
        <shortName>SAT</shortName>
    </alternativeName>
</protein>
<accession>P74241</accession>
<comment type="catalytic activity">
    <reaction>
        <text>sulfate + ATP + H(+) = adenosine 5'-phosphosulfate + diphosphate</text>
        <dbReference type="Rhea" id="RHEA:18133"/>
        <dbReference type="ChEBI" id="CHEBI:15378"/>
        <dbReference type="ChEBI" id="CHEBI:16189"/>
        <dbReference type="ChEBI" id="CHEBI:30616"/>
        <dbReference type="ChEBI" id="CHEBI:33019"/>
        <dbReference type="ChEBI" id="CHEBI:58243"/>
        <dbReference type="EC" id="2.7.7.4"/>
    </reaction>
</comment>
<comment type="pathway">
    <text>Sulfur metabolism; hydrogen sulfide biosynthesis; sulfite from sulfate: step 1/3.</text>
</comment>
<comment type="similarity">
    <text evidence="1">Belongs to the sulfate adenylyltransferase family.</text>
</comment>
<reference key="1">
    <citation type="journal article" date="1996" name="DNA Res.">
        <title>Sequence analysis of the genome of the unicellular cyanobacterium Synechocystis sp. strain PCC6803. II. Sequence determination of the entire genome and assignment of potential protein-coding regions.</title>
        <authorList>
            <person name="Kaneko T."/>
            <person name="Sato S."/>
            <person name="Kotani H."/>
            <person name="Tanaka A."/>
            <person name="Asamizu E."/>
            <person name="Nakamura Y."/>
            <person name="Miyajima N."/>
            <person name="Hirosawa M."/>
            <person name="Sugiura M."/>
            <person name="Sasamoto S."/>
            <person name="Kimura T."/>
            <person name="Hosouchi T."/>
            <person name="Matsuno A."/>
            <person name="Muraki A."/>
            <person name="Nakazaki N."/>
            <person name="Naruo K."/>
            <person name="Okumura S."/>
            <person name="Shimpo S."/>
            <person name="Takeuchi C."/>
            <person name="Wada T."/>
            <person name="Watanabe A."/>
            <person name="Yamada M."/>
            <person name="Yasuda M."/>
            <person name="Tabata S."/>
        </authorList>
    </citation>
    <scope>NUCLEOTIDE SEQUENCE [LARGE SCALE GENOMIC DNA]</scope>
    <source>
        <strain>ATCC 27184 / PCC 6803 / Kazusa</strain>
    </source>
</reference>
<feature type="chain" id="PRO_0000105944" description="Sulfate adenylyltransferase">
    <location>
        <begin position="1"/>
        <end position="390"/>
    </location>
</feature>
<sequence>MTTSLAAIAPHGGQLINRLAPEAERQEFLAIADKLPRVQLDERATSDLVMIAIGGFSPLKGFMEQDDYELVVEEMKLSNGLPWSVPVTLSVTEEVAAPLEVGSWVRLDNSAGKFIGVLELTQKYHYNKAHEAKNVYRTDDQAHPGVKVIYDQGPVNLAGPIWLLEREPHPLFPKYQIDPAASRQLFAERGWKTIVGFQTRNPIHRAHEYIQKCALEVVDGLFLHPLVGATKSDDIPADVRMRCYEIMVDNYFPKERVILGINPSAMRYAGPREAIFHALIRKNYGCTHFIVGRDHAGVGDYYGTYDAQEIFDEFAPEALGIVPMKFEHAFYCKKTLQMATTKTSPSGPEDRIHLSGTKVRALLRDGQLPPPEFSRPEVAQELIRAMQGES</sequence>
<evidence type="ECO:0000305" key="1"/>
<keyword id="KW-0067">ATP-binding</keyword>
<keyword id="KW-0547">Nucleotide-binding</keyword>
<keyword id="KW-0548">Nucleotidyltransferase</keyword>
<keyword id="KW-1185">Reference proteome</keyword>
<keyword id="KW-0808">Transferase</keyword>